<accession>O36375</accession>
<comment type="function">
    <text evidence="1">Self-assembles to form an icosahedral capsid with a T=16 symmetry, about 200 nm in diameter, and consisting of 150 hexons and 12 pentons (total of 162 capsomers). Hexons form the edges and faces of the capsid and are each composed of six MCP molecules. In contrast, one penton is found at each of the 12 vertices. Eleven of the pentons are MCP pentamers, while the last vertex is occupied by the portal complex. The capsid is surrounded by a layer of proteinaceous material designated the tegument which, in turn, is enclosed in an envelope of host cell-derived lipids containing virus-encoded glycoproteins.</text>
</comment>
<comment type="subunit">
    <text evidence="1">Homomultimer. Makes the hexons and eleven out of twelve pentons. Interacts with triplex proteins 1/TRX1 and 2/TRX2; adjacent capsomers are linked together in groups of three by triplexes, heterotrimeric complexes composed of one molecule of TRX1 and two molecules of TRX2. Interacts with scaffold protein; this interaction allows efficient MCP transport to the host nucleus. Interacts with capsid vertex component 2/CVC2. Interacts with the small capsomere-interacting protein/SCP.</text>
</comment>
<comment type="subcellular location">
    <subcellularLocation>
        <location evidence="1">Virion</location>
    </subcellularLocation>
    <subcellularLocation>
        <location evidence="1">Host nucleus</location>
    </subcellularLocation>
</comment>
<comment type="similarity">
    <text evidence="1">Belongs to the herpesviridae major capsid protein family.</text>
</comment>
<reference key="1">
    <citation type="journal article" date="1997" name="J. Virol.">
        <title>Primary structure of the alcelaphine herpesvirus 1 genome.</title>
        <authorList>
            <person name="Ensser A."/>
            <person name="Pflanz R."/>
            <person name="Fleckenstein B."/>
        </authorList>
    </citation>
    <scope>NUCLEOTIDE SEQUENCE [LARGE SCALE GENOMIC DNA]</scope>
</reference>
<protein>
    <recommendedName>
        <fullName evidence="1">Major capsid protein</fullName>
        <shortName evidence="1">MCP</shortName>
    </recommendedName>
</protein>
<sequence length="1370" mass="153358">MEVCRLENRPLPHAAVEANLLRQVKESAAEGLFKSFQLLVGKDVRENSVRFEVLLGVYANVIEFVKFLETGLAASCINTEFRDLKRMVDGKIQFKVSVPTIAHSDGRRPNKQRQYIVMKCTSKHHISAEIELAIADLENMHMEPETDLDMLEYIGTVKTVTSALQFGIDALERGLIDTVLSVKLRHAPPLFILQSLSDPTLTERGLKKSIKSDLVSMFKDHLITHSFFINKAEALATPRQYILGMLSSIINSVSKETVFKGTSTYTTSSGEPVAGVIETTDAILNKLLTLLGEYKTEVVGPAAYASYVVRGENLVTAVSYGRAMRSFEQFKNKLVDDPVGQAGSLDKNADSDNEYSSLPQTTIPVSVVKVGSQPVIVESIQKMYNEAQAPFPLNRRMQYTYFFPLGLFIPRPKYTTSTSVKLEDDSCLSSEVWVVNKTNTPLCFNYQNALRTLCHPRVNSPSACLQELQRSNLADNALEAFRDGLRSRPMDNMNLFAHVRRFYLKRTEVVLLPIAQKCNLSTDDLLHPTNHKLLQLELHPLFDFVVERVAAEEAAFRATHRTFSGNIPQPLAPNQFQDSRGKQFEAATSLQHAVDDATLEVIRSTAFDPTYPFICYIVEAMIHGQPEKFTMNIPFISLCINTYWDNSGNLAFINSFFMVKNICTHMGGGLINRDAYALYRKILGEVVAIKHAIVRMCGAEQLGNNELQGYVNGLLDRQLLPPFAYRDTFAQLDNRGARFVIGAKEHDNSQAFVHALPDFENANQVAPAMYHTRNTFNWDTFEYITVSNGNNDADAADLEKIYYYVMLPVCTNGHMCGMGADFENIAIVLGYNIPVFDIPQFNGDDTVLEHLENGPLRDILIASEVNPTADMLRMMIVSYLNCPQMTQVVRVKTRRDHCQNLGPEQGAIIEHTVMVNGFVCFGIPERMKQVAKNMFYPVPFHRFYCDPLVAGSWDNHIQNYVMNNFSQRSLEAFNAPPGIMADYAEWHKAPMAKYITSCKASTASLSAFTVMHNKLSPIAFIVQAKHKIHPGFALTVLRTDEVLAENVMFSARASTSVFVGRPTVSRREVRADAVSFEVNHELATIETGLSYSSVVTPAHVASITTDMGIYCQNLFSIFSNEIYDHADVNNYVARKIGVEDAVNRHNPRALIAGVGQISHPPGLVHGQYATCEVIPTPVTADVAYFQKSNSPRGRASCVVSSDINNQERAEQFLYDHSLPDPAYEYRSTVNPWASQKGSLGDVLYGSRYRQVSSPGIYSPSKPFFNKEEMLKNNRSFYTLVNEYAQRLAGYAATSCTDLQYVVINGTDVFLEQPCLFLQEAFPTLSASHRVLLDEYMSFKNTHAPVHMGHYFIEEVAPVKRVFKIGNKVAS</sequence>
<name>MCP_ALHV1</name>
<organismHost>
    <name type="scientific">Connochaetes taurinus</name>
    <name type="common">Blue wildebeest</name>
    <dbReference type="NCBI Taxonomy" id="9927"/>
</organismHost>
<evidence type="ECO:0000255" key="1">
    <source>
        <dbReference type="HAMAP-Rule" id="MF_04016"/>
    </source>
</evidence>
<gene>
    <name evidence="1" type="primary">MCP</name>
    <name type="synonym">25</name>
</gene>
<proteinExistence type="inferred from homology"/>
<keyword id="KW-0167">Capsid protein</keyword>
<keyword id="KW-1048">Host nucleus</keyword>
<keyword id="KW-1185">Reference proteome</keyword>
<keyword id="KW-1147">T=16 icosahedral capsid protein</keyword>
<keyword id="KW-0946">Virion</keyword>
<dbReference type="EMBL" id="AF005370">
    <property type="protein sequence ID" value="AAC58072.1"/>
    <property type="molecule type" value="Genomic_DNA"/>
</dbReference>
<dbReference type="PIR" id="T03120">
    <property type="entry name" value="T03120"/>
</dbReference>
<dbReference type="RefSeq" id="NP_065524.1">
    <property type="nucleotide sequence ID" value="NC_002531.1"/>
</dbReference>
<dbReference type="SMR" id="O36375"/>
<dbReference type="KEGG" id="vg:911741"/>
<dbReference type="Proteomes" id="UP000000941">
    <property type="component" value="Segment"/>
</dbReference>
<dbReference type="GO" id="GO:0042025">
    <property type="term" value="C:host cell nucleus"/>
    <property type="evidence" value="ECO:0007669"/>
    <property type="project" value="UniProtKB-SubCell"/>
</dbReference>
<dbReference type="GO" id="GO:0039622">
    <property type="term" value="C:T=16 icosahedral viral capsid"/>
    <property type="evidence" value="ECO:0007669"/>
    <property type="project" value="UniProtKB-KW"/>
</dbReference>
<dbReference type="GO" id="GO:0005198">
    <property type="term" value="F:structural molecule activity"/>
    <property type="evidence" value="ECO:0007669"/>
    <property type="project" value="InterPro"/>
</dbReference>
<dbReference type="HAMAP" id="MF_04016">
    <property type="entry name" value="HSV_MCP"/>
    <property type="match status" value="1"/>
</dbReference>
<dbReference type="InterPro" id="IPR000912">
    <property type="entry name" value="Herpes_MCP"/>
</dbReference>
<dbReference type="InterPro" id="IPR023233">
    <property type="entry name" value="Herpes_MCP_upper_sf"/>
</dbReference>
<dbReference type="Pfam" id="PF03122">
    <property type="entry name" value="Herpes_MCP"/>
    <property type="match status" value="1"/>
</dbReference>
<dbReference type="PRINTS" id="PR00235">
    <property type="entry name" value="HSVCAPSIDMCP"/>
</dbReference>
<dbReference type="SUPFAM" id="SSF103417">
    <property type="entry name" value="Major capsid protein VP5"/>
    <property type="match status" value="1"/>
</dbReference>
<feature type="chain" id="PRO_0000405715" description="Major capsid protein">
    <location>
        <begin position="1"/>
        <end position="1370"/>
    </location>
</feature>
<organism>
    <name type="scientific">Alcelaphine herpesvirus 1 (strain C500)</name>
    <name type="common">AlHV-1</name>
    <name type="synonym">Malignant catarrhal fever virus</name>
    <dbReference type="NCBI Taxonomy" id="654901"/>
    <lineage>
        <taxon>Viruses</taxon>
        <taxon>Duplodnaviria</taxon>
        <taxon>Heunggongvirae</taxon>
        <taxon>Peploviricota</taxon>
        <taxon>Herviviricetes</taxon>
        <taxon>Herpesvirales</taxon>
        <taxon>Orthoherpesviridae</taxon>
        <taxon>Gammaherpesvirinae</taxon>
        <taxon>Macavirus</taxon>
        <taxon>Macavirus alcelaphinegamma1</taxon>
    </lineage>
</organism>